<organism>
    <name type="scientific">Ralstonia nicotianae (strain ATCC BAA-1114 / GMI1000)</name>
    <name type="common">Ralstonia solanacearum</name>
    <dbReference type="NCBI Taxonomy" id="267608"/>
    <lineage>
        <taxon>Bacteria</taxon>
        <taxon>Pseudomonadati</taxon>
        <taxon>Pseudomonadota</taxon>
        <taxon>Betaproteobacteria</taxon>
        <taxon>Burkholderiales</taxon>
        <taxon>Burkholderiaceae</taxon>
        <taxon>Ralstonia</taxon>
        <taxon>Ralstonia solanacearum species complex</taxon>
    </lineage>
</organism>
<feature type="chain" id="PRO_0000206991" description="Exodeoxyribonuclease 7 small subunit">
    <location>
        <begin position="1"/>
        <end position="94"/>
    </location>
</feature>
<proteinExistence type="inferred from homology"/>
<sequence length="94" mass="9936">MPRAQDVAQSDATLSSPATPASYEAAMAELETLVASMESGELPLEASLAAYRRGAELVRYCQQVLERVEQQVRVLDGDALKPLAGEGTNEQGGA</sequence>
<dbReference type="EC" id="3.1.11.6" evidence="1"/>
<dbReference type="EMBL" id="AL646052">
    <property type="protein sequence ID" value="CAD15930.1"/>
    <property type="molecule type" value="Genomic_DNA"/>
</dbReference>
<dbReference type="RefSeq" id="WP_011002151.1">
    <property type="nucleotide sequence ID" value="NC_003295.1"/>
</dbReference>
<dbReference type="SMR" id="Q8XX93"/>
<dbReference type="STRING" id="267608.RSc2223"/>
<dbReference type="EnsemblBacteria" id="CAD15930">
    <property type="protein sequence ID" value="CAD15930"/>
    <property type="gene ID" value="RSc2223"/>
</dbReference>
<dbReference type="KEGG" id="rso:RSc2223"/>
<dbReference type="PATRIC" id="fig|267608.8.peg.2262"/>
<dbReference type="eggNOG" id="COG1722">
    <property type="taxonomic scope" value="Bacteria"/>
</dbReference>
<dbReference type="HOGENOM" id="CLU_145918_2_0_4"/>
<dbReference type="Proteomes" id="UP000001436">
    <property type="component" value="Chromosome"/>
</dbReference>
<dbReference type="GO" id="GO:0005829">
    <property type="term" value="C:cytosol"/>
    <property type="evidence" value="ECO:0007669"/>
    <property type="project" value="TreeGrafter"/>
</dbReference>
<dbReference type="GO" id="GO:0009318">
    <property type="term" value="C:exodeoxyribonuclease VII complex"/>
    <property type="evidence" value="ECO:0007669"/>
    <property type="project" value="InterPro"/>
</dbReference>
<dbReference type="GO" id="GO:0008855">
    <property type="term" value="F:exodeoxyribonuclease VII activity"/>
    <property type="evidence" value="ECO:0007669"/>
    <property type="project" value="UniProtKB-UniRule"/>
</dbReference>
<dbReference type="GO" id="GO:0006308">
    <property type="term" value="P:DNA catabolic process"/>
    <property type="evidence" value="ECO:0007669"/>
    <property type="project" value="UniProtKB-UniRule"/>
</dbReference>
<dbReference type="Gene3D" id="1.10.287.1040">
    <property type="entry name" value="Exonuclease VII, small subunit"/>
    <property type="match status" value="1"/>
</dbReference>
<dbReference type="HAMAP" id="MF_00337">
    <property type="entry name" value="Exonuc_7_S"/>
    <property type="match status" value="1"/>
</dbReference>
<dbReference type="InterPro" id="IPR003761">
    <property type="entry name" value="Exonuc_VII_S"/>
</dbReference>
<dbReference type="InterPro" id="IPR037004">
    <property type="entry name" value="Exonuc_VII_ssu_sf"/>
</dbReference>
<dbReference type="NCBIfam" id="NF002140">
    <property type="entry name" value="PRK00977.1-4"/>
    <property type="match status" value="1"/>
</dbReference>
<dbReference type="NCBIfam" id="NF002141">
    <property type="entry name" value="PRK00977.1-5"/>
    <property type="match status" value="1"/>
</dbReference>
<dbReference type="NCBIfam" id="TIGR01280">
    <property type="entry name" value="xseB"/>
    <property type="match status" value="1"/>
</dbReference>
<dbReference type="PANTHER" id="PTHR34137">
    <property type="entry name" value="EXODEOXYRIBONUCLEASE 7 SMALL SUBUNIT"/>
    <property type="match status" value="1"/>
</dbReference>
<dbReference type="PANTHER" id="PTHR34137:SF1">
    <property type="entry name" value="EXODEOXYRIBONUCLEASE 7 SMALL SUBUNIT"/>
    <property type="match status" value="1"/>
</dbReference>
<dbReference type="Pfam" id="PF02609">
    <property type="entry name" value="Exonuc_VII_S"/>
    <property type="match status" value="1"/>
</dbReference>
<dbReference type="PIRSF" id="PIRSF006488">
    <property type="entry name" value="Exonuc_VII_S"/>
    <property type="match status" value="1"/>
</dbReference>
<dbReference type="SUPFAM" id="SSF116842">
    <property type="entry name" value="XseB-like"/>
    <property type="match status" value="1"/>
</dbReference>
<reference key="1">
    <citation type="journal article" date="2002" name="Nature">
        <title>Genome sequence of the plant pathogen Ralstonia solanacearum.</title>
        <authorList>
            <person name="Salanoubat M."/>
            <person name="Genin S."/>
            <person name="Artiguenave F."/>
            <person name="Gouzy J."/>
            <person name="Mangenot S."/>
            <person name="Arlat M."/>
            <person name="Billault A."/>
            <person name="Brottier P."/>
            <person name="Camus J.-C."/>
            <person name="Cattolico L."/>
            <person name="Chandler M."/>
            <person name="Choisne N."/>
            <person name="Claudel-Renard C."/>
            <person name="Cunnac S."/>
            <person name="Demange N."/>
            <person name="Gaspin C."/>
            <person name="Lavie M."/>
            <person name="Moisan A."/>
            <person name="Robert C."/>
            <person name="Saurin W."/>
            <person name="Schiex T."/>
            <person name="Siguier P."/>
            <person name="Thebault P."/>
            <person name="Whalen M."/>
            <person name="Wincker P."/>
            <person name="Levy M."/>
            <person name="Weissenbach J."/>
            <person name="Boucher C.A."/>
        </authorList>
    </citation>
    <scope>NUCLEOTIDE SEQUENCE [LARGE SCALE GENOMIC DNA]</scope>
    <source>
        <strain>ATCC BAA-1114 / GMI1000</strain>
    </source>
</reference>
<name>EX7S_RALN1</name>
<protein>
    <recommendedName>
        <fullName evidence="1">Exodeoxyribonuclease 7 small subunit</fullName>
        <ecNumber evidence="1">3.1.11.6</ecNumber>
    </recommendedName>
    <alternativeName>
        <fullName evidence="1">Exodeoxyribonuclease VII small subunit</fullName>
        <shortName evidence="1">Exonuclease VII small subunit</shortName>
    </alternativeName>
</protein>
<accession>Q8XX93</accession>
<comment type="function">
    <text evidence="1">Bidirectionally degrades single-stranded DNA into large acid-insoluble oligonucleotides, which are then degraded further into small acid-soluble oligonucleotides.</text>
</comment>
<comment type="catalytic activity">
    <reaction evidence="1">
        <text>Exonucleolytic cleavage in either 5'- to 3'- or 3'- to 5'-direction to yield nucleoside 5'-phosphates.</text>
        <dbReference type="EC" id="3.1.11.6"/>
    </reaction>
</comment>
<comment type="subunit">
    <text evidence="1">Heterooligomer composed of large and small subunits.</text>
</comment>
<comment type="subcellular location">
    <subcellularLocation>
        <location evidence="1">Cytoplasm</location>
    </subcellularLocation>
</comment>
<comment type="similarity">
    <text evidence="1">Belongs to the XseB family.</text>
</comment>
<evidence type="ECO:0000255" key="1">
    <source>
        <dbReference type="HAMAP-Rule" id="MF_00337"/>
    </source>
</evidence>
<gene>
    <name evidence="1" type="primary">xseB</name>
    <name type="ordered locus">RSc2223</name>
    <name type="ORF">RS01376</name>
</gene>
<keyword id="KW-0963">Cytoplasm</keyword>
<keyword id="KW-0269">Exonuclease</keyword>
<keyword id="KW-0378">Hydrolase</keyword>
<keyword id="KW-0540">Nuclease</keyword>
<keyword id="KW-1185">Reference proteome</keyword>